<gene>
    <name type="primary">LF2</name>
</gene>
<dbReference type="EMBL" id="AY961628">
    <property type="protein sequence ID" value="ABA06394.1"/>
    <property type="molecule type" value="Genomic_DNA"/>
</dbReference>
<dbReference type="IntAct" id="Q3KSP5">
    <property type="interactions" value="1"/>
</dbReference>
<dbReference type="Proteomes" id="UP000007641">
    <property type="component" value="Genome"/>
</dbReference>
<dbReference type="GO" id="GO:0042802">
    <property type="term" value="F:identical protein binding"/>
    <property type="evidence" value="ECO:0000353"/>
    <property type="project" value="IntAct"/>
</dbReference>
<dbReference type="GO" id="GO:0052170">
    <property type="term" value="P:symbiont-mediated suppression of host innate immune response"/>
    <property type="evidence" value="ECO:0007669"/>
    <property type="project" value="UniProtKB-KW"/>
</dbReference>
<dbReference type="InterPro" id="IPR006882">
    <property type="entry name" value="Herpes_Orf11"/>
</dbReference>
<dbReference type="Pfam" id="PF04797">
    <property type="entry name" value="Herpes_ORF11"/>
    <property type="match status" value="1"/>
</dbReference>
<accession>Q3KSP5</accession>
<comment type="function">
    <text evidence="1">Prevents the establishment of cellular antiviral state by blocking the cellular IRF7-mediated innate immunity. May also inhibit viral replication by modulating BRLF1 activity (By similarity).</text>
</comment>
<comment type="subunit">
    <text evidence="1">Interacts with host IRF7; this interaction inhibits IRF7 dimerization, thereby altering its function in immunity. Interacts with BRLF1; this interaction modulates BRLF1 function (By similarity).</text>
</comment>
<comment type="interaction">
    <interactant intactId="EBI-2621084">
        <id>Q3KSP5</id>
    </interactant>
    <interactant intactId="EBI-2621084">
        <id>Q3KSP5</id>
        <label>LF2</label>
    </interactant>
    <organismsDiffer>false</organismsDiffer>
    <experiments>2</experiments>
</comment>
<comment type="interaction">
    <interactant intactId="EBI-2621084">
        <id>Q3KSP5</id>
    </interactant>
    <interactant intactId="EBI-2621080">
        <id>P03209</id>
        <label>BRLF1</label>
    </interactant>
    <organismsDiffer>true</organismsDiffer>
    <experiments>2</experiments>
</comment>
<comment type="similarity">
    <text evidence="2">Belongs to the epstein-barr virus LF2 family.</text>
</comment>
<reference key="1">
    <citation type="journal article" date="2005" name="J. Virol.">
        <title>Genomic sequence analysis of Epstein-Barr virus strain GD1 from a nasopharyngeal carcinoma patient.</title>
        <authorList>
            <person name="Zeng M.-S."/>
            <person name="Li D.-J."/>
            <person name="Liu Q.-L."/>
            <person name="Song L.-B."/>
            <person name="Li M.-Z."/>
            <person name="Zhang R.-H."/>
            <person name="Yu X.-J."/>
            <person name="Wang H.-M."/>
            <person name="Ernberg I."/>
            <person name="Zeng Y.-X."/>
        </authorList>
    </citation>
    <scope>NUCLEOTIDE SEQUENCE [LARGE SCALE GENOMIC DNA]</scope>
    <source>
        <strain>Raji</strain>
    </source>
</reference>
<protein>
    <recommendedName>
        <fullName>Protein LF2</fullName>
    </recommendedName>
</protein>
<organismHost>
    <name type="scientific">Homo sapiens</name>
    <name type="common">Human</name>
    <dbReference type="NCBI Taxonomy" id="9606"/>
</organismHost>
<sequence>MAEAYPGGAHAALASRRSSFRNSLRRLRPTEKPDTSFMRGVWKYEIFPSYVRVTNKQVLQLDAQCQELPPCPSVGQILSFKLPSFSFNTTTYGSRYFTVAFLFFGAEDNEVFLKPFFVMHSAPGHRAKRPESAQPVHREREVYLVHCAHQIGQEPLPLPADSARAERHSADTLLHPERGQAKHQRAPDLPQWLSRHQPGRVPALPAGAAHAPISKVIRPYSHIPGEGMSGQRHTPR</sequence>
<organism>
    <name type="scientific">Epstein-Barr virus (strain GD1)</name>
    <name type="common">HHV-4</name>
    <name type="synonym">Human gammaherpesvirus 4</name>
    <dbReference type="NCBI Taxonomy" id="10376"/>
    <lineage>
        <taxon>Viruses</taxon>
        <taxon>Duplodnaviria</taxon>
        <taxon>Heunggongvirae</taxon>
        <taxon>Peploviricota</taxon>
        <taxon>Herviviricetes</taxon>
        <taxon>Herpesvirales</taxon>
        <taxon>Orthoherpesviridae</taxon>
        <taxon>Gammaherpesvirinae</taxon>
        <taxon>Lymphocryptovirus</taxon>
        <taxon>Lymphocryptovirus humangamma4</taxon>
    </lineage>
</organism>
<proteinExistence type="evidence at protein level"/>
<evidence type="ECO:0000250" key="1"/>
<evidence type="ECO:0000305" key="2"/>
<feature type="chain" id="PRO_0000382452" description="Protein LF2">
    <location>
        <begin position="1"/>
        <end position="236"/>
    </location>
</feature>
<name>LF2_EBVG</name>
<keyword id="KW-0945">Host-virus interaction</keyword>
<keyword id="KW-1090">Inhibition of host innate immune response by virus</keyword>
<keyword id="KW-0922">Interferon antiviral system evasion</keyword>
<keyword id="KW-0899">Viral immunoevasion</keyword>